<accession>Q6G723</accession>
<keyword id="KW-0677">Repeat</keyword>
<keyword id="KW-0964">Secreted</keyword>
<keyword id="KW-0732">Signal</keyword>
<keyword id="KW-0843">Virulence</keyword>
<dbReference type="EMBL" id="BX571857">
    <property type="protein sequence ID" value="CAG44000.1"/>
    <property type="molecule type" value="Genomic_DNA"/>
</dbReference>
<dbReference type="RefSeq" id="WP_000717388.1">
    <property type="nucleotide sequence ID" value="NC_002953.3"/>
</dbReference>
<dbReference type="SMR" id="Q6G723"/>
<dbReference type="KEGG" id="sas:SAS2189"/>
<dbReference type="HOGENOM" id="CLU_016043_11_0_9"/>
<dbReference type="GO" id="GO:0005576">
    <property type="term" value="C:extracellular region"/>
    <property type="evidence" value="ECO:0007669"/>
    <property type="project" value="UniProtKB-SubCell"/>
</dbReference>
<dbReference type="Gene3D" id="3.90.1720.10">
    <property type="entry name" value="endopeptidase domain like (from Nostoc punctiforme)"/>
    <property type="match status" value="1"/>
</dbReference>
<dbReference type="InterPro" id="IPR007921">
    <property type="entry name" value="CHAP_dom"/>
</dbReference>
<dbReference type="InterPro" id="IPR038765">
    <property type="entry name" value="Papain-like_cys_pep_sf"/>
</dbReference>
<dbReference type="Pfam" id="PF05257">
    <property type="entry name" value="CHAP"/>
    <property type="match status" value="1"/>
</dbReference>
<dbReference type="SUPFAM" id="SSF54001">
    <property type="entry name" value="Cysteine proteinases"/>
    <property type="match status" value="1"/>
</dbReference>
<dbReference type="PROSITE" id="PS50911">
    <property type="entry name" value="CHAP"/>
    <property type="match status" value="1"/>
</dbReference>
<gene>
    <name type="primary">ssaA2</name>
    <name type="ordered locus">SAS2189</name>
</gene>
<proteinExistence type="inferred from homology"/>
<reference key="1">
    <citation type="journal article" date="2004" name="Proc. Natl. Acad. Sci. U.S.A.">
        <title>Complete genomes of two clinical Staphylococcus aureus strains: evidence for the rapid evolution of virulence and drug resistance.</title>
        <authorList>
            <person name="Holden M.T.G."/>
            <person name="Feil E.J."/>
            <person name="Lindsay J.A."/>
            <person name="Peacock S.J."/>
            <person name="Day N.P.J."/>
            <person name="Enright M.C."/>
            <person name="Foster T.J."/>
            <person name="Moore C.E."/>
            <person name="Hurst L."/>
            <person name="Atkin R."/>
            <person name="Barron A."/>
            <person name="Bason N."/>
            <person name="Bentley S.D."/>
            <person name="Chillingworth C."/>
            <person name="Chillingworth T."/>
            <person name="Churcher C."/>
            <person name="Clark L."/>
            <person name="Corton C."/>
            <person name="Cronin A."/>
            <person name="Doggett J."/>
            <person name="Dowd L."/>
            <person name="Feltwell T."/>
            <person name="Hance Z."/>
            <person name="Harris B."/>
            <person name="Hauser H."/>
            <person name="Holroyd S."/>
            <person name="Jagels K."/>
            <person name="James K.D."/>
            <person name="Lennard N."/>
            <person name="Line A."/>
            <person name="Mayes R."/>
            <person name="Moule S."/>
            <person name="Mungall K."/>
            <person name="Ormond D."/>
            <person name="Quail M.A."/>
            <person name="Rabbinowitsch E."/>
            <person name="Rutherford K.M."/>
            <person name="Sanders M."/>
            <person name="Sharp S."/>
            <person name="Simmonds M."/>
            <person name="Stevens K."/>
            <person name="Whitehead S."/>
            <person name="Barrell B.G."/>
            <person name="Spratt B.G."/>
            <person name="Parkhill J."/>
        </authorList>
    </citation>
    <scope>NUCLEOTIDE SEQUENCE [LARGE SCALE GENOMIC DNA]</scope>
    <source>
        <strain>MSSA476</strain>
    </source>
</reference>
<comment type="function">
    <text evidence="1">Not known; immunogenic protein.</text>
</comment>
<comment type="subcellular location">
    <subcellularLocation>
        <location evidence="1">Secreted</location>
    </subcellularLocation>
</comment>
<protein>
    <recommendedName>
        <fullName>Staphylococcal secretory antigen ssaA2</fullName>
    </recommendedName>
</protein>
<sequence length="269" mass="29604">MKKIATATIATAGFATIAIASGNQAHASEQDNYGYNPNDPTSYSYTYTIDAQGNYHYTWKGNWHPSQLNQDNGYYSYYYYNGYNNYNYNNYNNGYSYNNYSRYNNYSNNNQSYNYNNYNSYNTNSYRTGGLGASYSTSSNNVQVTTTMAPSSNGRSISSGYTSGRNLYTSGQCTYYVFDRVGGKIGSTWGNASNWANAAARAGYTVNNTPKAGAIMQTTQGAYGHVAYVESVNSNGSVRVSEMNYGYGPGVVTSRTISASQAAGYNFIH</sequence>
<feature type="signal peptide" evidence="2">
    <location>
        <begin position="1"/>
        <end position="27"/>
    </location>
</feature>
<feature type="chain" id="PRO_0000045318" description="Staphylococcal secretory antigen ssaA2">
    <location>
        <begin position="28"/>
        <end position="269"/>
    </location>
</feature>
<feature type="repeat" description="1">
    <location>
        <begin position="83"/>
        <end position="85"/>
    </location>
</feature>
<feature type="repeat" description="2">
    <location>
        <begin position="88"/>
        <end position="90"/>
    </location>
</feature>
<feature type="repeat" description="3">
    <location>
        <begin position="91"/>
        <end position="93"/>
    </location>
</feature>
<feature type="repeat" description="4">
    <location>
        <begin position="97"/>
        <end position="99"/>
    </location>
</feature>
<feature type="repeat" description="5">
    <location>
        <begin position="103"/>
        <end position="105"/>
    </location>
</feature>
<feature type="repeat" description="6">
    <location>
        <begin position="106"/>
        <end position="108"/>
    </location>
</feature>
<feature type="repeat" description="7">
    <location>
        <begin position="115"/>
        <end position="117"/>
    </location>
</feature>
<feature type="domain" description="Peptidase C51" evidence="3">
    <location>
        <begin position="148"/>
        <end position="269"/>
    </location>
</feature>
<feature type="region of interest" description="7 X 3 AA repeats of Y-[NS]-N">
    <location>
        <begin position="83"/>
        <end position="115"/>
    </location>
</feature>
<evidence type="ECO:0000250" key="1"/>
<evidence type="ECO:0000255" key="2"/>
<evidence type="ECO:0000255" key="3">
    <source>
        <dbReference type="PROSITE-ProRule" id="PRU00048"/>
    </source>
</evidence>
<name>SSAA2_STAAS</name>
<organism>
    <name type="scientific">Staphylococcus aureus (strain MSSA476)</name>
    <dbReference type="NCBI Taxonomy" id="282459"/>
    <lineage>
        <taxon>Bacteria</taxon>
        <taxon>Bacillati</taxon>
        <taxon>Bacillota</taxon>
        <taxon>Bacilli</taxon>
        <taxon>Bacillales</taxon>
        <taxon>Staphylococcaceae</taxon>
        <taxon>Staphylococcus</taxon>
    </lineage>
</organism>